<gene>
    <name type="primary">TIM8</name>
    <name type="ordered locus">CAGL0M00418g</name>
</gene>
<organism>
    <name type="scientific">Candida glabrata (strain ATCC 2001 / BCRC 20586 / JCM 3761 / NBRC 0622 / NRRL Y-65 / CBS 138)</name>
    <name type="common">Yeast</name>
    <name type="synonym">Nakaseomyces glabratus</name>
    <dbReference type="NCBI Taxonomy" id="284593"/>
    <lineage>
        <taxon>Eukaryota</taxon>
        <taxon>Fungi</taxon>
        <taxon>Dikarya</taxon>
        <taxon>Ascomycota</taxon>
        <taxon>Saccharomycotina</taxon>
        <taxon>Saccharomycetes</taxon>
        <taxon>Saccharomycetales</taxon>
        <taxon>Saccharomycetaceae</taxon>
        <taxon>Nakaseomyces</taxon>
    </lineage>
</organism>
<name>TIM8_CANGA</name>
<keyword id="KW-0143">Chaperone</keyword>
<keyword id="KW-1015">Disulfide bond</keyword>
<keyword id="KW-0472">Membrane</keyword>
<keyword id="KW-0479">Metal-binding</keyword>
<keyword id="KW-0496">Mitochondrion</keyword>
<keyword id="KW-0999">Mitochondrion inner membrane</keyword>
<keyword id="KW-0653">Protein transport</keyword>
<keyword id="KW-1185">Reference proteome</keyword>
<keyword id="KW-0811">Translocation</keyword>
<keyword id="KW-0813">Transport</keyword>
<keyword id="KW-0862">Zinc</keyword>
<sequence length="87" mass="9685">MSNLNPGELGDLTDASKKEIAAYLDAENSKQKVRTSINQFTDICFKKCISRVDNGNLSSQEEECLASCVNRFLDTNIRVVRGLQNSQ</sequence>
<accession>Q6FK81</accession>
<reference key="1">
    <citation type="journal article" date="2004" name="Nature">
        <title>Genome evolution in yeasts.</title>
        <authorList>
            <person name="Dujon B."/>
            <person name="Sherman D."/>
            <person name="Fischer G."/>
            <person name="Durrens P."/>
            <person name="Casaregola S."/>
            <person name="Lafontaine I."/>
            <person name="de Montigny J."/>
            <person name="Marck C."/>
            <person name="Neuveglise C."/>
            <person name="Talla E."/>
            <person name="Goffard N."/>
            <person name="Frangeul L."/>
            <person name="Aigle M."/>
            <person name="Anthouard V."/>
            <person name="Babour A."/>
            <person name="Barbe V."/>
            <person name="Barnay S."/>
            <person name="Blanchin S."/>
            <person name="Beckerich J.-M."/>
            <person name="Beyne E."/>
            <person name="Bleykasten C."/>
            <person name="Boisrame A."/>
            <person name="Boyer J."/>
            <person name="Cattolico L."/>
            <person name="Confanioleri F."/>
            <person name="de Daruvar A."/>
            <person name="Despons L."/>
            <person name="Fabre E."/>
            <person name="Fairhead C."/>
            <person name="Ferry-Dumazet H."/>
            <person name="Groppi A."/>
            <person name="Hantraye F."/>
            <person name="Hennequin C."/>
            <person name="Jauniaux N."/>
            <person name="Joyet P."/>
            <person name="Kachouri R."/>
            <person name="Kerrest A."/>
            <person name="Koszul R."/>
            <person name="Lemaire M."/>
            <person name="Lesur I."/>
            <person name="Ma L."/>
            <person name="Muller H."/>
            <person name="Nicaud J.-M."/>
            <person name="Nikolski M."/>
            <person name="Oztas S."/>
            <person name="Ozier-Kalogeropoulos O."/>
            <person name="Pellenz S."/>
            <person name="Potier S."/>
            <person name="Richard G.-F."/>
            <person name="Straub M.-L."/>
            <person name="Suleau A."/>
            <person name="Swennen D."/>
            <person name="Tekaia F."/>
            <person name="Wesolowski-Louvel M."/>
            <person name="Westhof E."/>
            <person name="Wirth B."/>
            <person name="Zeniou-Meyer M."/>
            <person name="Zivanovic Y."/>
            <person name="Bolotin-Fukuhara M."/>
            <person name="Thierry A."/>
            <person name="Bouchier C."/>
            <person name="Caudron B."/>
            <person name="Scarpelli C."/>
            <person name="Gaillardin C."/>
            <person name="Weissenbach J."/>
            <person name="Wincker P."/>
            <person name="Souciet J.-L."/>
        </authorList>
    </citation>
    <scope>NUCLEOTIDE SEQUENCE [LARGE SCALE GENOMIC DNA]</scope>
    <source>
        <strain>ATCC 2001 / BCRC 20586 / JCM 3761 / NBRC 0622 / NRRL Y-65 / CBS 138</strain>
    </source>
</reference>
<dbReference type="EMBL" id="CR380959">
    <property type="protein sequence ID" value="CAG62339.1"/>
    <property type="molecule type" value="Genomic_DNA"/>
</dbReference>
<dbReference type="RefSeq" id="XP_449363.1">
    <property type="nucleotide sequence ID" value="XM_449363.1"/>
</dbReference>
<dbReference type="SMR" id="Q6FK81"/>
<dbReference type="FunCoup" id="Q6FK81">
    <property type="interactions" value="566"/>
</dbReference>
<dbReference type="STRING" id="284593.Q6FK81"/>
<dbReference type="EnsemblFungi" id="CAGL0M00418g-T">
    <property type="protein sequence ID" value="CAGL0M00418g-T-p1"/>
    <property type="gene ID" value="CAGL0M00418g"/>
</dbReference>
<dbReference type="KEGG" id="cgr:2891154"/>
<dbReference type="CGD" id="CAL0136851">
    <property type="gene designation" value="CAGL0M00418g"/>
</dbReference>
<dbReference type="VEuPathDB" id="FungiDB:B1J91_M00418g"/>
<dbReference type="VEuPathDB" id="FungiDB:CAGL0M00418g"/>
<dbReference type="eggNOG" id="KOG3489">
    <property type="taxonomic scope" value="Eukaryota"/>
</dbReference>
<dbReference type="HOGENOM" id="CLU_141397_1_0_1"/>
<dbReference type="InParanoid" id="Q6FK81"/>
<dbReference type="OMA" id="NEICWDK"/>
<dbReference type="Proteomes" id="UP000002428">
    <property type="component" value="Chromosome M"/>
</dbReference>
<dbReference type="GO" id="GO:0005743">
    <property type="term" value="C:mitochondrial inner membrane"/>
    <property type="evidence" value="ECO:0007669"/>
    <property type="project" value="UniProtKB-SubCell"/>
</dbReference>
<dbReference type="GO" id="GO:0042719">
    <property type="term" value="C:mitochondrial intermembrane space protein transporter complex"/>
    <property type="evidence" value="ECO:0007669"/>
    <property type="project" value="EnsemblFungi"/>
</dbReference>
<dbReference type="GO" id="GO:0046872">
    <property type="term" value="F:metal ion binding"/>
    <property type="evidence" value="ECO:0007669"/>
    <property type="project" value="UniProtKB-KW"/>
</dbReference>
<dbReference type="GO" id="GO:0140318">
    <property type="term" value="F:protein transporter activity"/>
    <property type="evidence" value="ECO:0007669"/>
    <property type="project" value="EnsemblFungi"/>
</dbReference>
<dbReference type="GO" id="GO:0045039">
    <property type="term" value="P:protein insertion into mitochondrial inner membrane"/>
    <property type="evidence" value="ECO:0007669"/>
    <property type="project" value="EnsemblFungi"/>
</dbReference>
<dbReference type="Gene3D" id="1.10.287.810">
    <property type="entry name" value="Mitochondrial import inner membrane translocase subunit tim13 like domains"/>
    <property type="match status" value="1"/>
</dbReference>
<dbReference type="InterPro" id="IPR004217">
    <property type="entry name" value="Tim10-like"/>
</dbReference>
<dbReference type="InterPro" id="IPR035427">
    <property type="entry name" value="Tim10-like_dom_sf"/>
</dbReference>
<dbReference type="Pfam" id="PF02953">
    <property type="entry name" value="zf-Tim10_DDP"/>
    <property type="match status" value="1"/>
</dbReference>
<dbReference type="SUPFAM" id="SSF144122">
    <property type="entry name" value="Tim10-like"/>
    <property type="match status" value="1"/>
</dbReference>
<feature type="chain" id="PRO_0000228030" description="Mitochondrial import inner membrane translocase subunit TIM8">
    <location>
        <begin position="1"/>
        <end position="87"/>
    </location>
</feature>
<feature type="short sequence motif" description="Twin CX3C motif">
    <location>
        <begin position="44"/>
        <end position="68"/>
    </location>
</feature>
<feature type="disulfide bond" evidence="1">
    <location>
        <begin position="44"/>
        <end position="68"/>
    </location>
</feature>
<feature type="disulfide bond" evidence="1">
    <location>
        <begin position="48"/>
        <end position="64"/>
    </location>
</feature>
<protein>
    <recommendedName>
        <fullName>Mitochondrial import inner membrane translocase subunit TIM8</fullName>
    </recommendedName>
</protein>
<proteinExistence type="inferred from homology"/>
<evidence type="ECO:0000250" key="1"/>
<evidence type="ECO:0000305" key="2"/>
<comment type="function">
    <text evidence="1">Mitochondrial intermembrane chaperone that participates in the import and insertion of some multi-pass transmembrane proteins into the mitochondrial inner membrane. Also required for the transfer of beta-barrel precursors from the TOM complex to the sorting and assembly machinery (SAM complex) of the outer membrane. Acts as a chaperone-like protein that protects the hydrophobic precursors from aggregation and guide them through the mitochondrial intermembrane space. The TIM8-TIM13 complex is non essential and only mediates the import of few proteins, while the predominant TIM9-TIM10 70 kDa complex is crucial and mediates the import of much more proteins (By similarity).</text>
</comment>
<comment type="subunit">
    <text evidence="1">Heterohexamer; composed of 3 copies of TIM8 and 3 copies of TIM13, named soluble 70 kDa complex. Associates with the TIM22 complex, whose core is composed of TIM22 and TIM54. Interacts with the transmembrane regions of multi-pass transmembrane proteins in transit (By similarity).</text>
</comment>
<comment type="subcellular location">
    <subcellularLocation>
        <location evidence="1">Mitochondrion inner membrane</location>
        <topology evidence="1">Peripheral membrane protein</topology>
        <orientation evidence="1">Intermembrane side</orientation>
    </subcellularLocation>
</comment>
<comment type="domain">
    <text evidence="1">The twin CX3C motif contains 4 conserved Cys residues that form 2 disulfide bonds in the mitochondrial intermembrane space. However, during the transit of TIM8 from cytoplasm into mitochondrion, the Cys residues probably coordinate zinc, thereby preventing folding and allowing its transfer across mitochondrial outer membrane (By similarity).</text>
</comment>
<comment type="similarity">
    <text evidence="2">Belongs to the small Tim family.</text>
</comment>